<name>G6PI_SALTI</name>
<gene>
    <name evidence="1" type="primary">pgi</name>
    <name type="ordered locus">STY4417</name>
    <name type="ordered locus">t4127</name>
</gene>
<organism>
    <name type="scientific">Salmonella typhi</name>
    <dbReference type="NCBI Taxonomy" id="90370"/>
    <lineage>
        <taxon>Bacteria</taxon>
        <taxon>Pseudomonadati</taxon>
        <taxon>Pseudomonadota</taxon>
        <taxon>Gammaproteobacteria</taxon>
        <taxon>Enterobacterales</taxon>
        <taxon>Enterobacteriaceae</taxon>
        <taxon>Salmonella</taxon>
    </lineage>
</organism>
<feature type="chain" id="PRO_0000180722" description="Glucose-6-phosphate isomerase">
    <location>
        <begin position="1"/>
        <end position="549"/>
    </location>
</feature>
<feature type="active site" description="Proton donor" evidence="1">
    <location>
        <position position="355"/>
    </location>
</feature>
<feature type="active site" evidence="1">
    <location>
        <position position="386"/>
    </location>
</feature>
<feature type="active site" evidence="1">
    <location>
        <position position="514"/>
    </location>
</feature>
<keyword id="KW-0963">Cytoplasm</keyword>
<keyword id="KW-0312">Gluconeogenesis</keyword>
<keyword id="KW-0324">Glycolysis</keyword>
<keyword id="KW-0413">Isomerase</keyword>
<protein>
    <recommendedName>
        <fullName evidence="1">Glucose-6-phosphate isomerase</fullName>
        <shortName evidence="1">GPI</shortName>
        <ecNumber evidence="1">5.3.1.9</ecNumber>
    </recommendedName>
    <alternativeName>
        <fullName evidence="1">Phosphoglucose isomerase</fullName>
        <shortName evidence="1">PGI</shortName>
    </alternativeName>
    <alternativeName>
        <fullName evidence="1">Phosphohexose isomerase</fullName>
        <shortName evidence="1">PHI</shortName>
    </alternativeName>
</protein>
<reference key="1">
    <citation type="journal article" date="2001" name="Nature">
        <title>Complete genome sequence of a multiple drug resistant Salmonella enterica serovar Typhi CT18.</title>
        <authorList>
            <person name="Parkhill J."/>
            <person name="Dougan G."/>
            <person name="James K.D."/>
            <person name="Thomson N.R."/>
            <person name="Pickard D."/>
            <person name="Wain J."/>
            <person name="Churcher C.M."/>
            <person name="Mungall K.L."/>
            <person name="Bentley S.D."/>
            <person name="Holden M.T.G."/>
            <person name="Sebaihia M."/>
            <person name="Baker S."/>
            <person name="Basham D."/>
            <person name="Brooks K."/>
            <person name="Chillingworth T."/>
            <person name="Connerton P."/>
            <person name="Cronin A."/>
            <person name="Davis P."/>
            <person name="Davies R.M."/>
            <person name="Dowd L."/>
            <person name="White N."/>
            <person name="Farrar J."/>
            <person name="Feltwell T."/>
            <person name="Hamlin N."/>
            <person name="Haque A."/>
            <person name="Hien T.T."/>
            <person name="Holroyd S."/>
            <person name="Jagels K."/>
            <person name="Krogh A."/>
            <person name="Larsen T.S."/>
            <person name="Leather S."/>
            <person name="Moule S."/>
            <person name="O'Gaora P."/>
            <person name="Parry C."/>
            <person name="Quail M.A."/>
            <person name="Rutherford K.M."/>
            <person name="Simmonds M."/>
            <person name="Skelton J."/>
            <person name="Stevens K."/>
            <person name="Whitehead S."/>
            <person name="Barrell B.G."/>
        </authorList>
    </citation>
    <scope>NUCLEOTIDE SEQUENCE [LARGE SCALE GENOMIC DNA]</scope>
    <source>
        <strain>CT18</strain>
    </source>
</reference>
<reference key="2">
    <citation type="journal article" date="2003" name="J. Bacteriol.">
        <title>Comparative genomics of Salmonella enterica serovar Typhi strains Ty2 and CT18.</title>
        <authorList>
            <person name="Deng W."/>
            <person name="Liou S.-R."/>
            <person name="Plunkett G. III"/>
            <person name="Mayhew G.F."/>
            <person name="Rose D.J."/>
            <person name="Burland V."/>
            <person name="Kodoyianni V."/>
            <person name="Schwartz D.C."/>
            <person name="Blattner F.R."/>
        </authorList>
    </citation>
    <scope>NUCLEOTIDE SEQUENCE [LARGE SCALE GENOMIC DNA]</scope>
    <source>
        <strain>ATCC 700931 / Ty2</strain>
    </source>
</reference>
<comment type="function">
    <text evidence="1">Catalyzes the reversible isomerization of glucose-6-phosphate to fructose-6-phosphate.</text>
</comment>
<comment type="catalytic activity">
    <reaction evidence="1">
        <text>alpha-D-glucose 6-phosphate = beta-D-fructose 6-phosphate</text>
        <dbReference type="Rhea" id="RHEA:11816"/>
        <dbReference type="ChEBI" id="CHEBI:57634"/>
        <dbReference type="ChEBI" id="CHEBI:58225"/>
        <dbReference type="EC" id="5.3.1.9"/>
    </reaction>
</comment>
<comment type="pathway">
    <text evidence="1">Carbohydrate biosynthesis; gluconeogenesis.</text>
</comment>
<comment type="pathway">
    <text evidence="1">Carbohydrate degradation; glycolysis; D-glyceraldehyde 3-phosphate and glycerone phosphate from D-glucose: step 2/4.</text>
</comment>
<comment type="subcellular location">
    <subcellularLocation>
        <location evidence="1">Cytoplasm</location>
    </subcellularLocation>
</comment>
<comment type="similarity">
    <text evidence="1">Belongs to the GPI family.</text>
</comment>
<evidence type="ECO:0000255" key="1">
    <source>
        <dbReference type="HAMAP-Rule" id="MF_00473"/>
    </source>
</evidence>
<proteinExistence type="inferred from homology"/>
<sequence>MKNINPTQTSAWQALQKHYDEMKDVTIAELFANDSDRFAKFSATFDDLMLVDFSKNRITEETLAKLQDLAKETDLAGAIKSMFSGEKINRTEDRAVLHVALRNRSNTPIIVDGKDVMPEVNAVLEKMKTFSQAIISGQWKGYTGKAITDVVNIGIGGSDLGPFMVTEALRPYKNHLTMHFVSNVDGTHIAEVLKKVNPETTLFLVASKTFTTQETMTNAHSARDWFLKSAGDEKHVAKHFAALSTNAKAVGEFGIDTANMFEFWDWVGGRYSLWSAIGLSIILSVGFDNFVELLSGAHAMDKHFSTTPAEKNLPILLALIGIWYNNFFGAETEAILPYDQYMHRFAAYFQQGNMESNGKYVDRNGNAVDYQTGPIIWGEPGTNGQHAFYQLIHQGTKMVPCDFIAPAITHNPLSDHHQKLLSNFFAQTEALAFGKSREVVEQEYRDQGKDPAQLEHVVPFKVFEGNRPTNSILLREITPFSLGALIALYEHKIFTQGVILNIFTFDQWGVELGKQLANRILPELGDDKAISSHDSSTNGLINRYKAWRA</sequence>
<accession>Q8Z1U7</accession>
<dbReference type="EC" id="5.3.1.9" evidence="1"/>
<dbReference type="EMBL" id="AL513382">
    <property type="protein sequence ID" value="CAD09205.1"/>
    <property type="molecule type" value="Genomic_DNA"/>
</dbReference>
<dbReference type="EMBL" id="AE014613">
    <property type="protein sequence ID" value="AAO71591.1"/>
    <property type="molecule type" value="Genomic_DNA"/>
</dbReference>
<dbReference type="RefSeq" id="NP_458519.1">
    <property type="nucleotide sequence ID" value="NC_003198.1"/>
</dbReference>
<dbReference type="RefSeq" id="WP_000790033.1">
    <property type="nucleotide sequence ID" value="NZ_WSUR01000027.1"/>
</dbReference>
<dbReference type="SMR" id="Q8Z1U7"/>
<dbReference type="STRING" id="220341.gene:17588249"/>
<dbReference type="KEGG" id="stt:t4127"/>
<dbReference type="KEGG" id="sty:STY4417"/>
<dbReference type="PATRIC" id="fig|220341.7.peg.4517"/>
<dbReference type="eggNOG" id="COG0166">
    <property type="taxonomic scope" value="Bacteria"/>
</dbReference>
<dbReference type="HOGENOM" id="CLU_017947_3_1_6"/>
<dbReference type="OMA" id="DWYRQLW"/>
<dbReference type="OrthoDB" id="140919at2"/>
<dbReference type="UniPathway" id="UPA00109">
    <property type="reaction ID" value="UER00181"/>
</dbReference>
<dbReference type="UniPathway" id="UPA00138"/>
<dbReference type="Proteomes" id="UP000000541">
    <property type="component" value="Chromosome"/>
</dbReference>
<dbReference type="Proteomes" id="UP000002670">
    <property type="component" value="Chromosome"/>
</dbReference>
<dbReference type="GO" id="GO:0005829">
    <property type="term" value="C:cytosol"/>
    <property type="evidence" value="ECO:0007669"/>
    <property type="project" value="TreeGrafter"/>
</dbReference>
<dbReference type="GO" id="GO:0097367">
    <property type="term" value="F:carbohydrate derivative binding"/>
    <property type="evidence" value="ECO:0007669"/>
    <property type="project" value="InterPro"/>
</dbReference>
<dbReference type="GO" id="GO:0004347">
    <property type="term" value="F:glucose-6-phosphate isomerase activity"/>
    <property type="evidence" value="ECO:0007669"/>
    <property type="project" value="UniProtKB-UniRule"/>
</dbReference>
<dbReference type="GO" id="GO:0048029">
    <property type="term" value="F:monosaccharide binding"/>
    <property type="evidence" value="ECO:0007669"/>
    <property type="project" value="TreeGrafter"/>
</dbReference>
<dbReference type="GO" id="GO:0006094">
    <property type="term" value="P:gluconeogenesis"/>
    <property type="evidence" value="ECO:0007669"/>
    <property type="project" value="UniProtKB-UniRule"/>
</dbReference>
<dbReference type="GO" id="GO:0051156">
    <property type="term" value="P:glucose 6-phosphate metabolic process"/>
    <property type="evidence" value="ECO:0007669"/>
    <property type="project" value="TreeGrafter"/>
</dbReference>
<dbReference type="GO" id="GO:0006096">
    <property type="term" value="P:glycolytic process"/>
    <property type="evidence" value="ECO:0007669"/>
    <property type="project" value="UniProtKB-UniRule"/>
</dbReference>
<dbReference type="CDD" id="cd05015">
    <property type="entry name" value="SIS_PGI_1"/>
    <property type="match status" value="1"/>
</dbReference>
<dbReference type="CDD" id="cd05016">
    <property type="entry name" value="SIS_PGI_2"/>
    <property type="match status" value="1"/>
</dbReference>
<dbReference type="FunFam" id="1.10.1390.10:FF:000001">
    <property type="entry name" value="Glucose-6-phosphate isomerase"/>
    <property type="match status" value="1"/>
</dbReference>
<dbReference type="FunFam" id="3.40.50.10490:FF:000004">
    <property type="entry name" value="Glucose-6-phosphate isomerase"/>
    <property type="match status" value="1"/>
</dbReference>
<dbReference type="Gene3D" id="1.10.1390.10">
    <property type="match status" value="1"/>
</dbReference>
<dbReference type="Gene3D" id="3.40.50.10490">
    <property type="entry name" value="Glucose-6-phosphate isomerase like protein, domain 1"/>
    <property type="match status" value="2"/>
</dbReference>
<dbReference type="HAMAP" id="MF_00473">
    <property type="entry name" value="G6P_isomerase"/>
    <property type="match status" value="1"/>
</dbReference>
<dbReference type="InterPro" id="IPR001672">
    <property type="entry name" value="G6P_Isomerase"/>
</dbReference>
<dbReference type="InterPro" id="IPR023096">
    <property type="entry name" value="G6P_Isomerase_C"/>
</dbReference>
<dbReference type="InterPro" id="IPR018189">
    <property type="entry name" value="Phosphoglucose_isomerase_CS"/>
</dbReference>
<dbReference type="InterPro" id="IPR046348">
    <property type="entry name" value="SIS_dom_sf"/>
</dbReference>
<dbReference type="InterPro" id="IPR035476">
    <property type="entry name" value="SIS_PGI_1"/>
</dbReference>
<dbReference type="InterPro" id="IPR035482">
    <property type="entry name" value="SIS_PGI_2"/>
</dbReference>
<dbReference type="NCBIfam" id="NF001211">
    <property type="entry name" value="PRK00179.1"/>
    <property type="match status" value="1"/>
</dbReference>
<dbReference type="PANTHER" id="PTHR11469">
    <property type="entry name" value="GLUCOSE-6-PHOSPHATE ISOMERASE"/>
    <property type="match status" value="1"/>
</dbReference>
<dbReference type="PANTHER" id="PTHR11469:SF1">
    <property type="entry name" value="GLUCOSE-6-PHOSPHATE ISOMERASE"/>
    <property type="match status" value="1"/>
</dbReference>
<dbReference type="Pfam" id="PF00342">
    <property type="entry name" value="PGI"/>
    <property type="match status" value="1"/>
</dbReference>
<dbReference type="PRINTS" id="PR00662">
    <property type="entry name" value="G6PISOMERASE"/>
</dbReference>
<dbReference type="SUPFAM" id="SSF53697">
    <property type="entry name" value="SIS domain"/>
    <property type="match status" value="1"/>
</dbReference>
<dbReference type="PROSITE" id="PS00765">
    <property type="entry name" value="P_GLUCOSE_ISOMERASE_1"/>
    <property type="match status" value="1"/>
</dbReference>
<dbReference type="PROSITE" id="PS00174">
    <property type="entry name" value="P_GLUCOSE_ISOMERASE_2"/>
    <property type="match status" value="1"/>
</dbReference>
<dbReference type="PROSITE" id="PS51463">
    <property type="entry name" value="P_GLUCOSE_ISOMERASE_3"/>
    <property type="match status" value="1"/>
</dbReference>